<proteinExistence type="inferred from homology"/>
<protein>
    <recommendedName>
        <fullName evidence="1">3-octaprenyl-4-hydroxybenzoate carboxy-lyase</fullName>
        <ecNumber evidence="1">4.1.1.98</ecNumber>
    </recommendedName>
    <alternativeName>
        <fullName evidence="1">Polyprenyl p-hydroxybenzoate decarboxylase</fullName>
    </alternativeName>
</protein>
<keyword id="KW-1003">Cell membrane</keyword>
<keyword id="KW-0210">Decarboxylase</keyword>
<keyword id="KW-0285">Flavoprotein</keyword>
<keyword id="KW-0288">FMN</keyword>
<keyword id="KW-0456">Lyase</keyword>
<keyword id="KW-0464">Manganese</keyword>
<keyword id="KW-0472">Membrane</keyword>
<keyword id="KW-0479">Metal-binding</keyword>
<keyword id="KW-0831">Ubiquinone biosynthesis</keyword>
<organism>
    <name type="scientific">Legionella pneumophila (strain Corby)</name>
    <dbReference type="NCBI Taxonomy" id="400673"/>
    <lineage>
        <taxon>Bacteria</taxon>
        <taxon>Pseudomonadati</taxon>
        <taxon>Pseudomonadota</taxon>
        <taxon>Gammaproteobacteria</taxon>
        <taxon>Legionellales</taxon>
        <taxon>Legionellaceae</taxon>
        <taxon>Legionella</taxon>
    </lineage>
</organism>
<accession>A5IIC6</accession>
<name>UBID_LEGPC</name>
<reference key="1">
    <citation type="submission" date="2006-11" db="EMBL/GenBank/DDBJ databases">
        <title>Identification and characterization of a new conjugation/ type IVA secretion system (trb/tra) of L. pneumophila Corby localized on a mobile genomic island.</title>
        <authorList>
            <person name="Gloeckner G."/>
            <person name="Albert-Weissenberger C."/>
            <person name="Weinmann E."/>
            <person name="Jacobi S."/>
            <person name="Schunder E."/>
            <person name="Steinert M."/>
            <person name="Buchrieser C."/>
            <person name="Hacker J."/>
            <person name="Heuner K."/>
        </authorList>
    </citation>
    <scope>NUCLEOTIDE SEQUENCE [LARGE SCALE GENOMIC DNA]</scope>
    <source>
        <strain>Corby</strain>
    </source>
</reference>
<gene>
    <name evidence="1" type="primary">ubiD</name>
    <name type="ordered locus">LPC_3239</name>
</gene>
<comment type="function">
    <text evidence="1">Catalyzes the decarboxylation of 3-octaprenyl-4-hydroxy benzoate to 2-octaprenylphenol, an intermediate step in ubiquinone biosynthesis.</text>
</comment>
<comment type="catalytic activity">
    <reaction evidence="1">
        <text>a 4-hydroxy-3-(all-trans-polyprenyl)benzoate + H(+) = a 2-(all-trans-polyprenyl)phenol + CO2</text>
        <dbReference type="Rhea" id="RHEA:41680"/>
        <dbReference type="Rhea" id="RHEA-COMP:9514"/>
        <dbReference type="Rhea" id="RHEA-COMP:9516"/>
        <dbReference type="ChEBI" id="CHEBI:1269"/>
        <dbReference type="ChEBI" id="CHEBI:15378"/>
        <dbReference type="ChEBI" id="CHEBI:16526"/>
        <dbReference type="ChEBI" id="CHEBI:78396"/>
        <dbReference type="EC" id="4.1.1.98"/>
    </reaction>
</comment>
<comment type="cofactor">
    <cofactor evidence="1">
        <name>prenylated FMN</name>
        <dbReference type="ChEBI" id="CHEBI:87746"/>
    </cofactor>
    <text evidence="1">Binds 1 prenylated FMN per subunit.</text>
</comment>
<comment type="cofactor">
    <cofactor evidence="1">
        <name>Mn(2+)</name>
        <dbReference type="ChEBI" id="CHEBI:29035"/>
    </cofactor>
</comment>
<comment type="pathway">
    <text evidence="1">Cofactor biosynthesis; ubiquinone biosynthesis.</text>
</comment>
<comment type="subunit">
    <text evidence="1">Homohexamer.</text>
</comment>
<comment type="subcellular location">
    <subcellularLocation>
        <location evidence="1">Cell membrane</location>
        <topology evidence="1">Peripheral membrane protein</topology>
    </subcellularLocation>
</comment>
<comment type="similarity">
    <text evidence="1">Belongs to the UbiD family.</text>
</comment>
<evidence type="ECO:0000255" key="1">
    <source>
        <dbReference type="HAMAP-Rule" id="MF_01636"/>
    </source>
</evidence>
<dbReference type="EC" id="4.1.1.98" evidence="1"/>
<dbReference type="EMBL" id="CP000675">
    <property type="protein sequence ID" value="ABQ57126.1"/>
    <property type="molecule type" value="Genomic_DNA"/>
</dbReference>
<dbReference type="RefSeq" id="WP_011947828.1">
    <property type="nucleotide sequence ID" value="NZ_JAPMSS010000004.1"/>
</dbReference>
<dbReference type="SMR" id="A5IIC6"/>
<dbReference type="KEGG" id="lpc:LPC_3239"/>
<dbReference type="HOGENOM" id="CLU_023348_4_1_6"/>
<dbReference type="UniPathway" id="UPA00232"/>
<dbReference type="GO" id="GO:0005829">
    <property type="term" value="C:cytosol"/>
    <property type="evidence" value="ECO:0007669"/>
    <property type="project" value="TreeGrafter"/>
</dbReference>
<dbReference type="GO" id="GO:0005886">
    <property type="term" value="C:plasma membrane"/>
    <property type="evidence" value="ECO:0007669"/>
    <property type="project" value="UniProtKB-SubCell"/>
</dbReference>
<dbReference type="GO" id="GO:0008694">
    <property type="term" value="F:3-octaprenyl-4-hydroxybenzoate carboxy-lyase activity"/>
    <property type="evidence" value="ECO:0007669"/>
    <property type="project" value="UniProtKB-UniRule"/>
</dbReference>
<dbReference type="GO" id="GO:0046872">
    <property type="term" value="F:metal ion binding"/>
    <property type="evidence" value="ECO:0007669"/>
    <property type="project" value="UniProtKB-KW"/>
</dbReference>
<dbReference type="GO" id="GO:0006744">
    <property type="term" value="P:ubiquinone biosynthetic process"/>
    <property type="evidence" value="ECO:0007669"/>
    <property type="project" value="UniProtKB-UniRule"/>
</dbReference>
<dbReference type="FunFam" id="3.40.1670.10:FF:000001">
    <property type="entry name" value="3-octaprenyl-4-hydroxybenzoate carboxy-lyase"/>
    <property type="match status" value="1"/>
</dbReference>
<dbReference type="Gene3D" id="1.20.5.570">
    <property type="entry name" value="Single helix bin"/>
    <property type="match status" value="1"/>
</dbReference>
<dbReference type="Gene3D" id="3.40.1670.10">
    <property type="entry name" value="UbiD C-terminal domain-like"/>
    <property type="match status" value="1"/>
</dbReference>
<dbReference type="HAMAP" id="MF_01636">
    <property type="entry name" value="UbiD"/>
    <property type="match status" value="1"/>
</dbReference>
<dbReference type="InterPro" id="IPR002830">
    <property type="entry name" value="UbiD"/>
</dbReference>
<dbReference type="InterPro" id="IPR049381">
    <property type="entry name" value="UbiD-like_C"/>
</dbReference>
<dbReference type="InterPro" id="IPR049383">
    <property type="entry name" value="UbiD-like_N"/>
</dbReference>
<dbReference type="InterPro" id="IPR023677">
    <property type="entry name" value="UbiD_bacteria"/>
</dbReference>
<dbReference type="InterPro" id="IPR048304">
    <property type="entry name" value="UbiD_Rift_dom"/>
</dbReference>
<dbReference type="NCBIfam" id="NF008175">
    <property type="entry name" value="PRK10922.1"/>
    <property type="match status" value="1"/>
</dbReference>
<dbReference type="NCBIfam" id="TIGR00148">
    <property type="entry name" value="UbiD family decarboxylase"/>
    <property type="match status" value="1"/>
</dbReference>
<dbReference type="PANTHER" id="PTHR30108">
    <property type="entry name" value="3-OCTAPRENYL-4-HYDROXYBENZOATE CARBOXY-LYASE-RELATED"/>
    <property type="match status" value="1"/>
</dbReference>
<dbReference type="PANTHER" id="PTHR30108:SF17">
    <property type="entry name" value="FERULIC ACID DECARBOXYLASE 1"/>
    <property type="match status" value="1"/>
</dbReference>
<dbReference type="Pfam" id="PF01977">
    <property type="entry name" value="UbiD"/>
    <property type="match status" value="1"/>
</dbReference>
<dbReference type="Pfam" id="PF20696">
    <property type="entry name" value="UbiD_C"/>
    <property type="match status" value="1"/>
</dbReference>
<dbReference type="Pfam" id="PF20695">
    <property type="entry name" value="UbiD_N"/>
    <property type="match status" value="1"/>
</dbReference>
<dbReference type="SUPFAM" id="SSF50475">
    <property type="entry name" value="FMN-binding split barrel"/>
    <property type="match status" value="1"/>
</dbReference>
<dbReference type="SUPFAM" id="SSF143968">
    <property type="entry name" value="UbiD C-terminal domain-like"/>
    <property type="match status" value="1"/>
</dbReference>
<feature type="chain" id="PRO_1000069849" description="3-octaprenyl-4-hydroxybenzoate carboxy-lyase">
    <location>
        <begin position="1"/>
        <end position="488"/>
    </location>
</feature>
<feature type="active site" description="Proton donor" evidence="1">
    <location>
        <position position="287"/>
    </location>
</feature>
<feature type="binding site" evidence="1">
    <location>
        <position position="172"/>
    </location>
    <ligand>
        <name>Mn(2+)</name>
        <dbReference type="ChEBI" id="CHEBI:29035"/>
    </ligand>
</feature>
<feature type="binding site" evidence="1">
    <location>
        <begin position="175"/>
        <end position="177"/>
    </location>
    <ligand>
        <name>prenylated FMN</name>
        <dbReference type="ChEBI" id="CHEBI:87746"/>
    </ligand>
</feature>
<feature type="binding site" evidence="1">
    <location>
        <begin position="189"/>
        <end position="191"/>
    </location>
    <ligand>
        <name>prenylated FMN</name>
        <dbReference type="ChEBI" id="CHEBI:87746"/>
    </ligand>
</feature>
<feature type="binding site" evidence="1">
    <location>
        <begin position="194"/>
        <end position="195"/>
    </location>
    <ligand>
        <name>prenylated FMN</name>
        <dbReference type="ChEBI" id="CHEBI:87746"/>
    </ligand>
</feature>
<feature type="binding site" evidence="1">
    <location>
        <position position="238"/>
    </location>
    <ligand>
        <name>Mn(2+)</name>
        <dbReference type="ChEBI" id="CHEBI:29035"/>
    </ligand>
</feature>
<sequence length="488" mass="55026">MKYSDLRDFIAQLESRELLKRIDYPVSPHLEMTVVSDKVLRSGGPALLFTNTPNYNMPVLTNLFGTVERVALGMGEESIVALREIGKLLAALKEPDPPKGFKDAFSKLPLLKQALNMAPKYVSGAECQTHVWEKDEVDLTLLPIQTCWPGDVAPLITWGLVTTRGPHQSRENMGIYRQQLLSKNKLIMRWLSHRGGALDYQAWQQEYPQERFPVAVTLGADPATILAAVTPVPDTLSEYAFAGLLRGQRTRLTRCIGNDLHVPASAEIVLEGYLEPGNEAPEGPYGDHTGYYNEVQSFPVFTVERITHRDKPIYHSTYTGRPPDEPAILGVALNEVFIPLLQKQFPEIVDFYLPPEGCSYRLAVVTIKKQYPGHAKRIMMAVWSFLRQFMYTKFVIVCDDDVDARNWQDVIWAMTTRMDPSRDTVMVENTPIDYLDFASPVSGLGSKMGMDATSKWPGETQREWGKPITMDEDVLNRVNGYWSLLGLK</sequence>